<gene>
    <name evidence="1" type="primary">eno</name>
    <name type="ordered locus">Tgr7_1184</name>
</gene>
<sequence length="426" mass="44959">MSEIVDIHAREIIDSRGNPTVEAEVTLASGVMGRAAVPSGASTGAREAIELRDDDVRYGGKGVRKAVGHVNGEIREALLGMKATDLAAVDGRMIELDGTPNKSRLGANALLAVSMATAHANAADAGMPLYRHLGGEEAVTLPVPMMNIVNGGAHADNSVDMQEFMILPVGASSIAEAVRYGAEVFHALKKVLHKRGSSTAVGDEGGFAPDLPSNEAAIEVILEAIDKAGFKAGQDIWLGLDCASSEFHKDGKYVLASEGKSFDAAGFVDYLAGWVNQYPILTIEDGMAEDDWAGWKLLTEKLGGKVQLVGDDLFVTNTEILKEGIDKHIANSILIKLNQIGTVSETLAAIHMAHKAGYTAVISHRSGETEDVTIADLSVATQAGQIKTGSLSRSDRVAKYNQLIRIEEALGSAARYAGRGAFKQLG</sequence>
<proteinExistence type="inferred from homology"/>
<accession>B8GQ75</accession>
<reference key="1">
    <citation type="journal article" date="2011" name="Stand. Genomic Sci.">
        <title>Complete genome sequence of 'Thioalkalivibrio sulfidophilus' HL-EbGr7.</title>
        <authorList>
            <person name="Muyzer G."/>
            <person name="Sorokin D.Y."/>
            <person name="Mavromatis K."/>
            <person name="Lapidus A."/>
            <person name="Clum A."/>
            <person name="Ivanova N."/>
            <person name="Pati A."/>
            <person name="d'Haeseleer P."/>
            <person name="Woyke T."/>
            <person name="Kyrpides N.C."/>
        </authorList>
    </citation>
    <scope>NUCLEOTIDE SEQUENCE [LARGE SCALE GENOMIC DNA]</scope>
    <source>
        <strain>HL-EbGR7</strain>
    </source>
</reference>
<name>ENO_THISH</name>
<evidence type="ECO:0000255" key="1">
    <source>
        <dbReference type="HAMAP-Rule" id="MF_00318"/>
    </source>
</evidence>
<protein>
    <recommendedName>
        <fullName evidence="1">Enolase</fullName>
        <ecNumber evidence="1">4.2.1.11</ecNumber>
    </recommendedName>
    <alternativeName>
        <fullName evidence="1">2-phospho-D-glycerate hydro-lyase</fullName>
    </alternativeName>
    <alternativeName>
        <fullName evidence="1">2-phosphoglycerate dehydratase</fullName>
    </alternativeName>
</protein>
<dbReference type="EC" id="4.2.1.11" evidence="1"/>
<dbReference type="EMBL" id="CP001339">
    <property type="protein sequence ID" value="ACL72270.1"/>
    <property type="molecule type" value="Genomic_DNA"/>
</dbReference>
<dbReference type="RefSeq" id="WP_012637753.1">
    <property type="nucleotide sequence ID" value="NC_011901.1"/>
</dbReference>
<dbReference type="SMR" id="B8GQ75"/>
<dbReference type="STRING" id="396588.Tgr7_1184"/>
<dbReference type="KEGG" id="tgr:Tgr7_1184"/>
<dbReference type="eggNOG" id="COG0148">
    <property type="taxonomic scope" value="Bacteria"/>
</dbReference>
<dbReference type="HOGENOM" id="CLU_031223_2_1_6"/>
<dbReference type="OrthoDB" id="9804716at2"/>
<dbReference type="UniPathway" id="UPA00109">
    <property type="reaction ID" value="UER00187"/>
</dbReference>
<dbReference type="Proteomes" id="UP000002383">
    <property type="component" value="Chromosome"/>
</dbReference>
<dbReference type="GO" id="GO:0009986">
    <property type="term" value="C:cell surface"/>
    <property type="evidence" value="ECO:0007669"/>
    <property type="project" value="UniProtKB-SubCell"/>
</dbReference>
<dbReference type="GO" id="GO:0005576">
    <property type="term" value="C:extracellular region"/>
    <property type="evidence" value="ECO:0007669"/>
    <property type="project" value="UniProtKB-SubCell"/>
</dbReference>
<dbReference type="GO" id="GO:0000015">
    <property type="term" value="C:phosphopyruvate hydratase complex"/>
    <property type="evidence" value="ECO:0007669"/>
    <property type="project" value="InterPro"/>
</dbReference>
<dbReference type="GO" id="GO:0000287">
    <property type="term" value="F:magnesium ion binding"/>
    <property type="evidence" value="ECO:0007669"/>
    <property type="project" value="UniProtKB-UniRule"/>
</dbReference>
<dbReference type="GO" id="GO:0004634">
    <property type="term" value="F:phosphopyruvate hydratase activity"/>
    <property type="evidence" value="ECO:0007669"/>
    <property type="project" value="UniProtKB-UniRule"/>
</dbReference>
<dbReference type="GO" id="GO:0006096">
    <property type="term" value="P:glycolytic process"/>
    <property type="evidence" value="ECO:0007669"/>
    <property type="project" value="UniProtKB-UniRule"/>
</dbReference>
<dbReference type="CDD" id="cd03313">
    <property type="entry name" value="enolase"/>
    <property type="match status" value="1"/>
</dbReference>
<dbReference type="FunFam" id="3.20.20.120:FF:000001">
    <property type="entry name" value="Enolase"/>
    <property type="match status" value="1"/>
</dbReference>
<dbReference type="FunFam" id="3.30.390.10:FF:000001">
    <property type="entry name" value="Enolase"/>
    <property type="match status" value="1"/>
</dbReference>
<dbReference type="Gene3D" id="3.20.20.120">
    <property type="entry name" value="Enolase-like C-terminal domain"/>
    <property type="match status" value="1"/>
</dbReference>
<dbReference type="Gene3D" id="3.30.390.10">
    <property type="entry name" value="Enolase-like, N-terminal domain"/>
    <property type="match status" value="1"/>
</dbReference>
<dbReference type="HAMAP" id="MF_00318">
    <property type="entry name" value="Enolase"/>
    <property type="match status" value="1"/>
</dbReference>
<dbReference type="InterPro" id="IPR000941">
    <property type="entry name" value="Enolase"/>
</dbReference>
<dbReference type="InterPro" id="IPR036849">
    <property type="entry name" value="Enolase-like_C_sf"/>
</dbReference>
<dbReference type="InterPro" id="IPR029017">
    <property type="entry name" value="Enolase-like_N"/>
</dbReference>
<dbReference type="InterPro" id="IPR020810">
    <property type="entry name" value="Enolase_C"/>
</dbReference>
<dbReference type="InterPro" id="IPR020809">
    <property type="entry name" value="Enolase_CS"/>
</dbReference>
<dbReference type="InterPro" id="IPR020811">
    <property type="entry name" value="Enolase_N"/>
</dbReference>
<dbReference type="NCBIfam" id="TIGR01060">
    <property type="entry name" value="eno"/>
    <property type="match status" value="1"/>
</dbReference>
<dbReference type="PANTHER" id="PTHR11902">
    <property type="entry name" value="ENOLASE"/>
    <property type="match status" value="1"/>
</dbReference>
<dbReference type="PANTHER" id="PTHR11902:SF1">
    <property type="entry name" value="ENOLASE"/>
    <property type="match status" value="1"/>
</dbReference>
<dbReference type="Pfam" id="PF00113">
    <property type="entry name" value="Enolase_C"/>
    <property type="match status" value="1"/>
</dbReference>
<dbReference type="Pfam" id="PF03952">
    <property type="entry name" value="Enolase_N"/>
    <property type="match status" value="1"/>
</dbReference>
<dbReference type="PIRSF" id="PIRSF001400">
    <property type="entry name" value="Enolase"/>
    <property type="match status" value="1"/>
</dbReference>
<dbReference type="PRINTS" id="PR00148">
    <property type="entry name" value="ENOLASE"/>
</dbReference>
<dbReference type="SFLD" id="SFLDF00002">
    <property type="entry name" value="enolase"/>
    <property type="match status" value="1"/>
</dbReference>
<dbReference type="SFLD" id="SFLDG00178">
    <property type="entry name" value="enolase"/>
    <property type="match status" value="1"/>
</dbReference>
<dbReference type="SMART" id="SM01192">
    <property type="entry name" value="Enolase_C"/>
    <property type="match status" value="1"/>
</dbReference>
<dbReference type="SMART" id="SM01193">
    <property type="entry name" value="Enolase_N"/>
    <property type="match status" value="1"/>
</dbReference>
<dbReference type="SUPFAM" id="SSF51604">
    <property type="entry name" value="Enolase C-terminal domain-like"/>
    <property type="match status" value="1"/>
</dbReference>
<dbReference type="SUPFAM" id="SSF54826">
    <property type="entry name" value="Enolase N-terminal domain-like"/>
    <property type="match status" value="1"/>
</dbReference>
<dbReference type="PROSITE" id="PS00164">
    <property type="entry name" value="ENOLASE"/>
    <property type="match status" value="1"/>
</dbReference>
<comment type="function">
    <text evidence="1">Catalyzes the reversible conversion of 2-phosphoglycerate (2-PG) into phosphoenolpyruvate (PEP). It is essential for the degradation of carbohydrates via glycolysis.</text>
</comment>
<comment type="catalytic activity">
    <reaction evidence="1">
        <text>(2R)-2-phosphoglycerate = phosphoenolpyruvate + H2O</text>
        <dbReference type="Rhea" id="RHEA:10164"/>
        <dbReference type="ChEBI" id="CHEBI:15377"/>
        <dbReference type="ChEBI" id="CHEBI:58289"/>
        <dbReference type="ChEBI" id="CHEBI:58702"/>
        <dbReference type="EC" id="4.2.1.11"/>
    </reaction>
</comment>
<comment type="cofactor">
    <cofactor evidence="1">
        <name>Mg(2+)</name>
        <dbReference type="ChEBI" id="CHEBI:18420"/>
    </cofactor>
    <text evidence="1">Binds a second Mg(2+) ion via substrate during catalysis.</text>
</comment>
<comment type="pathway">
    <text evidence="1">Carbohydrate degradation; glycolysis; pyruvate from D-glyceraldehyde 3-phosphate: step 4/5.</text>
</comment>
<comment type="subunit">
    <text evidence="1">Component of the RNA degradosome, a multiprotein complex involved in RNA processing and mRNA degradation.</text>
</comment>
<comment type="subcellular location">
    <subcellularLocation>
        <location evidence="1">Cytoplasm</location>
    </subcellularLocation>
    <subcellularLocation>
        <location evidence="1">Secreted</location>
    </subcellularLocation>
    <subcellularLocation>
        <location evidence="1">Cell surface</location>
    </subcellularLocation>
    <text evidence="1">Fractions of enolase are present in both the cytoplasm and on the cell surface.</text>
</comment>
<comment type="similarity">
    <text evidence="1">Belongs to the enolase family.</text>
</comment>
<keyword id="KW-0963">Cytoplasm</keyword>
<keyword id="KW-0324">Glycolysis</keyword>
<keyword id="KW-0456">Lyase</keyword>
<keyword id="KW-0460">Magnesium</keyword>
<keyword id="KW-0479">Metal-binding</keyword>
<keyword id="KW-1185">Reference proteome</keyword>
<keyword id="KW-0964">Secreted</keyword>
<organism>
    <name type="scientific">Thioalkalivibrio sulfidiphilus (strain HL-EbGR7)</name>
    <dbReference type="NCBI Taxonomy" id="396588"/>
    <lineage>
        <taxon>Bacteria</taxon>
        <taxon>Pseudomonadati</taxon>
        <taxon>Pseudomonadota</taxon>
        <taxon>Gammaproteobacteria</taxon>
        <taxon>Chromatiales</taxon>
        <taxon>Ectothiorhodospiraceae</taxon>
        <taxon>Thioalkalivibrio</taxon>
    </lineage>
</organism>
<feature type="chain" id="PRO_1000133029" description="Enolase">
    <location>
        <begin position="1"/>
        <end position="426"/>
    </location>
</feature>
<feature type="active site" description="Proton donor" evidence="1">
    <location>
        <position position="204"/>
    </location>
</feature>
<feature type="active site" description="Proton acceptor" evidence="1">
    <location>
        <position position="336"/>
    </location>
</feature>
<feature type="binding site" evidence="1">
    <location>
        <position position="162"/>
    </location>
    <ligand>
        <name>(2R)-2-phosphoglycerate</name>
        <dbReference type="ChEBI" id="CHEBI:58289"/>
    </ligand>
</feature>
<feature type="binding site" evidence="1">
    <location>
        <position position="241"/>
    </location>
    <ligand>
        <name>Mg(2+)</name>
        <dbReference type="ChEBI" id="CHEBI:18420"/>
    </ligand>
</feature>
<feature type="binding site" evidence="1">
    <location>
        <position position="284"/>
    </location>
    <ligand>
        <name>Mg(2+)</name>
        <dbReference type="ChEBI" id="CHEBI:18420"/>
    </ligand>
</feature>
<feature type="binding site" evidence="1">
    <location>
        <position position="311"/>
    </location>
    <ligand>
        <name>Mg(2+)</name>
        <dbReference type="ChEBI" id="CHEBI:18420"/>
    </ligand>
</feature>
<feature type="binding site" evidence="1">
    <location>
        <position position="336"/>
    </location>
    <ligand>
        <name>(2R)-2-phosphoglycerate</name>
        <dbReference type="ChEBI" id="CHEBI:58289"/>
    </ligand>
</feature>
<feature type="binding site" evidence="1">
    <location>
        <position position="365"/>
    </location>
    <ligand>
        <name>(2R)-2-phosphoglycerate</name>
        <dbReference type="ChEBI" id="CHEBI:58289"/>
    </ligand>
</feature>
<feature type="binding site" evidence="1">
    <location>
        <position position="366"/>
    </location>
    <ligand>
        <name>(2R)-2-phosphoglycerate</name>
        <dbReference type="ChEBI" id="CHEBI:58289"/>
    </ligand>
</feature>
<feature type="binding site" evidence="1">
    <location>
        <position position="387"/>
    </location>
    <ligand>
        <name>(2R)-2-phosphoglycerate</name>
        <dbReference type="ChEBI" id="CHEBI:58289"/>
    </ligand>
</feature>